<evidence type="ECO:0000255" key="1">
    <source>
        <dbReference type="HAMAP-Rule" id="MF_00294"/>
    </source>
</evidence>
<name>RL332_LIMRJ</name>
<dbReference type="EMBL" id="AP007281">
    <property type="protein sequence ID" value="BAG25659.1"/>
    <property type="molecule type" value="Genomic_DNA"/>
</dbReference>
<dbReference type="SMR" id="B2G877"/>
<dbReference type="KEGG" id="lrf:LAR_1143"/>
<dbReference type="HOGENOM" id="CLU_190949_0_2_9"/>
<dbReference type="GO" id="GO:0005737">
    <property type="term" value="C:cytoplasm"/>
    <property type="evidence" value="ECO:0007669"/>
    <property type="project" value="UniProtKB-ARBA"/>
</dbReference>
<dbReference type="GO" id="GO:1990904">
    <property type="term" value="C:ribonucleoprotein complex"/>
    <property type="evidence" value="ECO:0007669"/>
    <property type="project" value="UniProtKB-KW"/>
</dbReference>
<dbReference type="GO" id="GO:0005840">
    <property type="term" value="C:ribosome"/>
    <property type="evidence" value="ECO:0007669"/>
    <property type="project" value="UniProtKB-KW"/>
</dbReference>
<dbReference type="GO" id="GO:0003735">
    <property type="term" value="F:structural constituent of ribosome"/>
    <property type="evidence" value="ECO:0007669"/>
    <property type="project" value="InterPro"/>
</dbReference>
<dbReference type="GO" id="GO:0006412">
    <property type="term" value="P:translation"/>
    <property type="evidence" value="ECO:0007669"/>
    <property type="project" value="UniProtKB-UniRule"/>
</dbReference>
<dbReference type="Gene3D" id="2.20.28.120">
    <property type="entry name" value="Ribosomal protein L33"/>
    <property type="match status" value="1"/>
</dbReference>
<dbReference type="HAMAP" id="MF_00294">
    <property type="entry name" value="Ribosomal_bL33"/>
    <property type="match status" value="1"/>
</dbReference>
<dbReference type="InterPro" id="IPR001705">
    <property type="entry name" value="Ribosomal_bL33"/>
</dbReference>
<dbReference type="InterPro" id="IPR018264">
    <property type="entry name" value="Ribosomal_bL33_CS"/>
</dbReference>
<dbReference type="InterPro" id="IPR038584">
    <property type="entry name" value="Ribosomal_bL33_sf"/>
</dbReference>
<dbReference type="InterPro" id="IPR011332">
    <property type="entry name" value="Ribosomal_zn-bd"/>
</dbReference>
<dbReference type="NCBIfam" id="NF001764">
    <property type="entry name" value="PRK00504.1"/>
    <property type="match status" value="1"/>
</dbReference>
<dbReference type="NCBIfam" id="NF001860">
    <property type="entry name" value="PRK00595.1"/>
    <property type="match status" value="1"/>
</dbReference>
<dbReference type="NCBIfam" id="TIGR01023">
    <property type="entry name" value="rpmG_bact"/>
    <property type="match status" value="1"/>
</dbReference>
<dbReference type="PANTHER" id="PTHR43168">
    <property type="entry name" value="50S RIBOSOMAL PROTEIN L33, CHLOROPLASTIC"/>
    <property type="match status" value="1"/>
</dbReference>
<dbReference type="PANTHER" id="PTHR43168:SF2">
    <property type="entry name" value="LARGE RIBOSOMAL SUBUNIT PROTEIN BL33C"/>
    <property type="match status" value="1"/>
</dbReference>
<dbReference type="Pfam" id="PF00471">
    <property type="entry name" value="Ribosomal_L33"/>
    <property type="match status" value="1"/>
</dbReference>
<dbReference type="SUPFAM" id="SSF57829">
    <property type="entry name" value="Zn-binding ribosomal proteins"/>
    <property type="match status" value="1"/>
</dbReference>
<dbReference type="PROSITE" id="PS00582">
    <property type="entry name" value="RIBOSOMAL_L33"/>
    <property type="match status" value="1"/>
</dbReference>
<keyword id="KW-0687">Ribonucleoprotein</keyword>
<keyword id="KW-0689">Ribosomal protein</keyword>
<organism>
    <name type="scientific">Limosilactobacillus reuteri subsp. reuteri (strain JCM 1112)</name>
    <name type="common">Lactobacillus reuteri</name>
    <dbReference type="NCBI Taxonomy" id="557433"/>
    <lineage>
        <taxon>Bacteria</taxon>
        <taxon>Bacillati</taxon>
        <taxon>Bacillota</taxon>
        <taxon>Bacilli</taxon>
        <taxon>Lactobacillales</taxon>
        <taxon>Lactobacillaceae</taxon>
        <taxon>Limosilactobacillus</taxon>
    </lineage>
</organism>
<reference key="1">
    <citation type="journal article" date="2008" name="DNA Res.">
        <title>Comparative genome analysis of Lactobacillus reuteri and Lactobacillus fermentum reveal a genomic island for reuterin and cobalamin production.</title>
        <authorList>
            <person name="Morita H."/>
            <person name="Toh H."/>
            <person name="Fukuda S."/>
            <person name="Horikawa H."/>
            <person name="Oshima K."/>
            <person name="Suzuki T."/>
            <person name="Murakami M."/>
            <person name="Hisamatsu S."/>
            <person name="Kato Y."/>
            <person name="Takizawa T."/>
            <person name="Fukuoka H."/>
            <person name="Yoshimura T."/>
            <person name="Itoh K."/>
            <person name="O'Sullivan D.J."/>
            <person name="McKay L.L."/>
            <person name="Ohno H."/>
            <person name="Kikuchi J."/>
            <person name="Masaoka T."/>
            <person name="Hattori M."/>
        </authorList>
    </citation>
    <scope>NUCLEOTIDE SEQUENCE [LARGE SCALE GENOMIC DNA]</scope>
    <source>
        <strain>JCM 1112</strain>
    </source>
</reference>
<gene>
    <name evidence="1" type="primary">rpmG2</name>
    <name type="ordered locus">LAR_1143</name>
</gene>
<sequence>MRVNITLECTSCHERTYLTSKNRRHNPDRLELNKYCPREQKVTLHRETK</sequence>
<comment type="similarity">
    <text evidence="1">Belongs to the bacterial ribosomal protein bL33 family.</text>
</comment>
<feature type="chain" id="PRO_0000356511" description="Large ribosomal subunit protein bL33B">
    <location>
        <begin position="1"/>
        <end position="49"/>
    </location>
</feature>
<proteinExistence type="inferred from homology"/>
<accession>B2G877</accession>
<protein>
    <recommendedName>
        <fullName evidence="1">Large ribosomal subunit protein bL33B</fullName>
    </recommendedName>
    <alternativeName>
        <fullName evidence="1">50S ribosomal protein L33 2</fullName>
    </alternativeName>
</protein>